<protein>
    <recommendedName>
        <fullName>Putative inactive group IIC secretory phospholipase A2</fullName>
    </recommendedName>
    <alternativeName>
        <fullName>Phosphatidylcholine 2-acylhydrolase-like protein GIIC</fullName>
    </alternativeName>
</protein>
<sequence length="149" mass="16844">MKVIAILTLLLFCSPTHSSFWQFQRRVKHITGRSAFFSYYGYGCYCGLGDKGIPVDDTDRHSPSSPSPYEKLKEFSCQPVLNSYQFHIVNGAVVCGCTLGPGASCHCRLKACECDKQSVHCFKESLPTYEKNFKQFSSQPRCGRHKPWC</sequence>
<evidence type="ECO:0000250" key="1"/>
<evidence type="ECO:0000255" key="2"/>
<evidence type="ECO:0000305" key="3"/>
<keyword id="KW-0106">Calcium</keyword>
<keyword id="KW-1015">Disulfide bond</keyword>
<keyword id="KW-0479">Metal-binding</keyword>
<keyword id="KW-1185">Reference proteome</keyword>
<keyword id="KW-0964">Secreted</keyword>
<keyword id="KW-0732">Signal</keyword>
<accession>Q5R387</accession>
<accession>Q7M4M6</accession>
<feature type="signal peptide" evidence="2">
    <location>
        <begin position="1"/>
        <end position="18"/>
    </location>
</feature>
<feature type="chain" id="PRO_0000319946" description="Putative inactive group IIC secretory phospholipase A2">
    <location>
        <begin position="19"/>
        <end position="149"/>
    </location>
</feature>
<feature type="binding site" evidence="1">
    <location>
        <position position="45"/>
    </location>
    <ligand>
        <name>Ca(2+)</name>
        <dbReference type="ChEBI" id="CHEBI:29108"/>
    </ligand>
</feature>
<feature type="binding site" evidence="1">
    <location>
        <position position="47"/>
    </location>
    <ligand>
        <name>Ca(2+)</name>
        <dbReference type="ChEBI" id="CHEBI:29108"/>
    </ligand>
</feature>
<feature type="binding site" evidence="1">
    <location>
        <position position="49"/>
    </location>
    <ligand>
        <name>Ca(2+)</name>
        <dbReference type="ChEBI" id="CHEBI:29108"/>
    </ligand>
</feature>
<feature type="disulfide bond" evidence="1">
    <location>
        <begin position="44"/>
        <end position="142"/>
    </location>
</feature>
<feature type="disulfide bond" evidence="1">
    <location>
        <begin position="77"/>
        <end position="107"/>
    </location>
</feature>
<feature type="disulfide bond" evidence="1">
    <location>
        <begin position="95"/>
        <end position="112"/>
    </location>
</feature>
<feature type="disulfide bond" evidence="2">
    <location>
        <begin position="97"/>
        <end position="105"/>
    </location>
</feature>
<feature type="sequence variant" id="VAR_039057" description="In dbSNP:rs6426616.">
    <original>Q</original>
    <variation>R</variation>
    <location>
        <position position="139"/>
    </location>
</feature>
<name>PA2GC_HUMAN</name>
<gene>
    <name type="primary">PLA2G2C</name>
</gene>
<dbReference type="EMBL" id="Z98257">
    <property type="status" value="NOT_ANNOTATED_CDS"/>
    <property type="molecule type" value="Genomic_DNA"/>
</dbReference>
<dbReference type="CCDS" id="CCDS90872.1"/>
<dbReference type="PIR" id="A60718">
    <property type="entry name" value="A60718"/>
</dbReference>
<dbReference type="RefSeq" id="NP_001354898.1">
    <property type="nucleotide sequence ID" value="NM_001367969.2"/>
</dbReference>
<dbReference type="SMR" id="Q5R387"/>
<dbReference type="FunCoup" id="Q5R387">
    <property type="interactions" value="491"/>
</dbReference>
<dbReference type="STRING" id="9606.ENSP00000247992"/>
<dbReference type="BindingDB" id="Q5R387"/>
<dbReference type="ChEMBL" id="CHEMBL2097"/>
<dbReference type="BioMuta" id="PLA2G2C"/>
<dbReference type="DMDM" id="300669681"/>
<dbReference type="PaxDb" id="9606-ENSP00000247992"/>
<dbReference type="PeptideAtlas" id="Q5R387"/>
<dbReference type="TopDownProteomics" id="Q5R387"/>
<dbReference type="Antibodypedia" id="57806">
    <property type="antibodies" value="53 antibodies from 7 providers"/>
</dbReference>
<dbReference type="Ensembl" id="ENST00000429261.2">
    <property type="protein sequence ID" value="ENSP00000389335.2"/>
    <property type="gene ID" value="ENSG00000187980.7"/>
</dbReference>
<dbReference type="Ensembl" id="ENST00000679259.1">
    <property type="protein sequence ID" value="ENSP00000504292.1"/>
    <property type="gene ID" value="ENSG00000187980.7"/>
</dbReference>
<dbReference type="GeneID" id="391013"/>
<dbReference type="MANE-Select" id="ENST00000679259.1">
    <property type="protein sequence ID" value="ENSP00000504292.1"/>
    <property type="RefSeq nucleotide sequence ID" value="NM_001367969.2"/>
    <property type="RefSeq protein sequence ID" value="NP_001354898.1"/>
</dbReference>
<dbReference type="UCSC" id="uc057cyp.1">
    <property type="organism name" value="human"/>
</dbReference>
<dbReference type="AGR" id="HGNC:9032"/>
<dbReference type="DisGeNET" id="391013"/>
<dbReference type="GeneCards" id="PLA2G2C"/>
<dbReference type="HGNC" id="HGNC:9032">
    <property type="gene designation" value="PLA2G2C"/>
</dbReference>
<dbReference type="HPA" id="ENSG00000187980">
    <property type="expression patterns" value="Tissue enhanced (intestine)"/>
</dbReference>
<dbReference type="neXtProt" id="NX_Q5R387"/>
<dbReference type="OpenTargets" id="ENSG00000187980"/>
<dbReference type="VEuPathDB" id="HostDB:ENSG00000187980"/>
<dbReference type="eggNOG" id="KOG4087">
    <property type="taxonomic scope" value="Eukaryota"/>
</dbReference>
<dbReference type="GeneTree" id="ENSGT00910000144349"/>
<dbReference type="HOGENOM" id="CLU_090683_3_0_1"/>
<dbReference type="InParanoid" id="Q5R387"/>
<dbReference type="OMA" id="CDRQSAY"/>
<dbReference type="OrthoDB" id="5841574at2759"/>
<dbReference type="PAN-GO" id="Q5R387">
    <property type="GO annotations" value="4 GO annotations based on evolutionary models"/>
</dbReference>
<dbReference type="PhylomeDB" id="Q5R387"/>
<dbReference type="TreeFam" id="TF319283"/>
<dbReference type="PathwayCommons" id="Q5R387"/>
<dbReference type="Pharos" id="Q5R387">
    <property type="development level" value="Tchem"/>
</dbReference>
<dbReference type="PRO" id="PR:Q5R387"/>
<dbReference type="Proteomes" id="UP000005640">
    <property type="component" value="Chromosome 1"/>
</dbReference>
<dbReference type="RNAct" id="Q5R387">
    <property type="molecule type" value="protein"/>
</dbReference>
<dbReference type="Bgee" id="ENSG00000187980">
    <property type="expression patterns" value="Expressed in muscle layer of sigmoid colon and 119 other cell types or tissues"/>
</dbReference>
<dbReference type="ExpressionAtlas" id="Q5R387">
    <property type="expression patterns" value="baseline and differential"/>
</dbReference>
<dbReference type="GO" id="GO:0005576">
    <property type="term" value="C:extracellular region"/>
    <property type="evidence" value="ECO:0007669"/>
    <property type="project" value="UniProtKB-SubCell"/>
</dbReference>
<dbReference type="GO" id="GO:0005509">
    <property type="term" value="F:calcium ion binding"/>
    <property type="evidence" value="ECO:0000318"/>
    <property type="project" value="GO_Central"/>
</dbReference>
<dbReference type="GO" id="GO:0047498">
    <property type="term" value="F:calcium-dependent phospholipase A2 activity"/>
    <property type="evidence" value="ECO:0000318"/>
    <property type="project" value="GO_Central"/>
</dbReference>
<dbReference type="GO" id="GO:0005543">
    <property type="term" value="F:phospholipid binding"/>
    <property type="evidence" value="ECO:0000318"/>
    <property type="project" value="GO_Central"/>
</dbReference>
<dbReference type="GO" id="GO:0005102">
    <property type="term" value="F:signaling receptor binding"/>
    <property type="evidence" value="ECO:0000318"/>
    <property type="project" value="GO_Central"/>
</dbReference>
<dbReference type="GO" id="GO:0050482">
    <property type="term" value="P:arachidonate secretion"/>
    <property type="evidence" value="ECO:0007669"/>
    <property type="project" value="InterPro"/>
</dbReference>
<dbReference type="GO" id="GO:0016042">
    <property type="term" value="P:lipid catabolic process"/>
    <property type="evidence" value="ECO:0007669"/>
    <property type="project" value="InterPro"/>
</dbReference>
<dbReference type="GO" id="GO:0046470">
    <property type="term" value="P:phosphatidylcholine metabolic process"/>
    <property type="evidence" value="ECO:0000318"/>
    <property type="project" value="GO_Central"/>
</dbReference>
<dbReference type="GO" id="GO:0046471">
    <property type="term" value="P:phosphatidylglycerol metabolic process"/>
    <property type="evidence" value="ECO:0000318"/>
    <property type="project" value="GO_Central"/>
</dbReference>
<dbReference type="FunFam" id="1.20.90.10:FF:000008">
    <property type="entry name" value="Phospholipase A(2)"/>
    <property type="match status" value="1"/>
</dbReference>
<dbReference type="Gene3D" id="1.20.90.10">
    <property type="entry name" value="Phospholipase A2 domain"/>
    <property type="match status" value="1"/>
</dbReference>
<dbReference type="InterPro" id="IPR001211">
    <property type="entry name" value="PLipase_A2"/>
</dbReference>
<dbReference type="InterPro" id="IPR033112">
    <property type="entry name" value="PLipase_A2_Asp_AS"/>
</dbReference>
<dbReference type="InterPro" id="IPR016090">
    <property type="entry name" value="PLipase_A2_dom"/>
</dbReference>
<dbReference type="InterPro" id="IPR036444">
    <property type="entry name" value="PLipase_A2_dom_sf"/>
</dbReference>
<dbReference type="PANTHER" id="PTHR11716:SF5">
    <property type="entry name" value="INACTIVE GROUP IIC SECRETORY PHOSPHOLIPASE A2-RELATED"/>
    <property type="match status" value="1"/>
</dbReference>
<dbReference type="PANTHER" id="PTHR11716">
    <property type="entry name" value="PHOSPHOLIPASE A2 FAMILY MEMBER"/>
    <property type="match status" value="1"/>
</dbReference>
<dbReference type="Pfam" id="PF00068">
    <property type="entry name" value="Phospholip_A2_1"/>
    <property type="match status" value="1"/>
</dbReference>
<dbReference type="PRINTS" id="PR00389">
    <property type="entry name" value="PHPHLIPASEA2"/>
</dbReference>
<dbReference type="SMART" id="SM00085">
    <property type="entry name" value="PA2c"/>
    <property type="match status" value="1"/>
</dbReference>
<dbReference type="SUPFAM" id="SSF48619">
    <property type="entry name" value="Phospholipase A2, PLA2"/>
    <property type="match status" value="1"/>
</dbReference>
<dbReference type="PROSITE" id="PS00119">
    <property type="entry name" value="PA2_ASP"/>
    <property type="match status" value="1"/>
</dbReference>
<reference key="1">
    <citation type="journal article" date="2006" name="Nature">
        <title>The DNA sequence and biological annotation of human chromosome 1.</title>
        <authorList>
            <person name="Gregory S.G."/>
            <person name="Barlow K.F."/>
            <person name="McLay K.E."/>
            <person name="Kaul R."/>
            <person name="Swarbreck D."/>
            <person name="Dunham A."/>
            <person name="Scott C.E."/>
            <person name="Howe K.L."/>
            <person name="Woodfine K."/>
            <person name="Spencer C.C.A."/>
            <person name="Jones M.C."/>
            <person name="Gillson C."/>
            <person name="Searle S."/>
            <person name="Zhou Y."/>
            <person name="Kokocinski F."/>
            <person name="McDonald L."/>
            <person name="Evans R."/>
            <person name="Phillips K."/>
            <person name="Atkinson A."/>
            <person name="Cooper R."/>
            <person name="Jones C."/>
            <person name="Hall R.E."/>
            <person name="Andrews T.D."/>
            <person name="Lloyd C."/>
            <person name="Ainscough R."/>
            <person name="Almeida J.P."/>
            <person name="Ambrose K.D."/>
            <person name="Anderson F."/>
            <person name="Andrew R.W."/>
            <person name="Ashwell R.I.S."/>
            <person name="Aubin K."/>
            <person name="Babbage A.K."/>
            <person name="Bagguley C.L."/>
            <person name="Bailey J."/>
            <person name="Beasley H."/>
            <person name="Bethel G."/>
            <person name="Bird C.P."/>
            <person name="Bray-Allen S."/>
            <person name="Brown J.Y."/>
            <person name="Brown A.J."/>
            <person name="Buckley D."/>
            <person name="Burton J."/>
            <person name="Bye J."/>
            <person name="Carder C."/>
            <person name="Chapman J.C."/>
            <person name="Clark S.Y."/>
            <person name="Clarke G."/>
            <person name="Clee C."/>
            <person name="Cobley V."/>
            <person name="Collier R.E."/>
            <person name="Corby N."/>
            <person name="Coville G.J."/>
            <person name="Davies J."/>
            <person name="Deadman R."/>
            <person name="Dunn M."/>
            <person name="Earthrowl M."/>
            <person name="Ellington A.G."/>
            <person name="Errington H."/>
            <person name="Frankish A."/>
            <person name="Frankland J."/>
            <person name="French L."/>
            <person name="Garner P."/>
            <person name="Garnett J."/>
            <person name="Gay L."/>
            <person name="Ghori M.R.J."/>
            <person name="Gibson R."/>
            <person name="Gilby L.M."/>
            <person name="Gillett W."/>
            <person name="Glithero R.J."/>
            <person name="Grafham D.V."/>
            <person name="Griffiths C."/>
            <person name="Griffiths-Jones S."/>
            <person name="Grocock R."/>
            <person name="Hammond S."/>
            <person name="Harrison E.S.I."/>
            <person name="Hart E."/>
            <person name="Haugen E."/>
            <person name="Heath P.D."/>
            <person name="Holmes S."/>
            <person name="Holt K."/>
            <person name="Howden P.J."/>
            <person name="Hunt A.R."/>
            <person name="Hunt S.E."/>
            <person name="Hunter G."/>
            <person name="Isherwood J."/>
            <person name="James R."/>
            <person name="Johnson C."/>
            <person name="Johnson D."/>
            <person name="Joy A."/>
            <person name="Kay M."/>
            <person name="Kershaw J.K."/>
            <person name="Kibukawa M."/>
            <person name="Kimberley A.M."/>
            <person name="King A."/>
            <person name="Knights A.J."/>
            <person name="Lad H."/>
            <person name="Laird G."/>
            <person name="Lawlor S."/>
            <person name="Leongamornlert D.A."/>
            <person name="Lloyd D.M."/>
            <person name="Loveland J."/>
            <person name="Lovell J."/>
            <person name="Lush M.J."/>
            <person name="Lyne R."/>
            <person name="Martin S."/>
            <person name="Mashreghi-Mohammadi M."/>
            <person name="Matthews L."/>
            <person name="Matthews N.S.W."/>
            <person name="McLaren S."/>
            <person name="Milne S."/>
            <person name="Mistry S."/>
            <person name="Moore M.J.F."/>
            <person name="Nickerson T."/>
            <person name="O'Dell C.N."/>
            <person name="Oliver K."/>
            <person name="Palmeiri A."/>
            <person name="Palmer S.A."/>
            <person name="Parker A."/>
            <person name="Patel D."/>
            <person name="Pearce A.V."/>
            <person name="Peck A.I."/>
            <person name="Pelan S."/>
            <person name="Phelps K."/>
            <person name="Phillimore B.J."/>
            <person name="Plumb R."/>
            <person name="Rajan J."/>
            <person name="Raymond C."/>
            <person name="Rouse G."/>
            <person name="Saenphimmachak C."/>
            <person name="Sehra H.K."/>
            <person name="Sheridan E."/>
            <person name="Shownkeen R."/>
            <person name="Sims S."/>
            <person name="Skuce C.D."/>
            <person name="Smith M."/>
            <person name="Steward C."/>
            <person name="Subramanian S."/>
            <person name="Sycamore N."/>
            <person name="Tracey A."/>
            <person name="Tromans A."/>
            <person name="Van Helmond Z."/>
            <person name="Wall M."/>
            <person name="Wallis J.M."/>
            <person name="White S."/>
            <person name="Whitehead S.L."/>
            <person name="Wilkinson J.E."/>
            <person name="Willey D.L."/>
            <person name="Williams H."/>
            <person name="Wilming L."/>
            <person name="Wray P.W."/>
            <person name="Wu Z."/>
            <person name="Coulson A."/>
            <person name="Vaudin M."/>
            <person name="Sulston J.E."/>
            <person name="Durbin R.M."/>
            <person name="Hubbard T."/>
            <person name="Wooster R."/>
            <person name="Dunham I."/>
            <person name="Carter N.P."/>
            <person name="McVean G."/>
            <person name="Ross M.T."/>
            <person name="Harrow J."/>
            <person name="Olson M.V."/>
            <person name="Beck S."/>
            <person name="Rogers J."/>
            <person name="Bentley D.R."/>
        </authorList>
    </citation>
    <scope>NUCLEOTIDE SEQUENCE [LARGE SCALE GENOMIC DNA]</scope>
</reference>
<reference key="2">
    <citation type="journal article" date="1989" name="J. Cell. Biochem.">
        <title>Novel gene exon homologous to pancreatic phospholipase A2: sequence and chromosomal mapping of both human genes.</title>
        <authorList>
            <person name="Seilhamer J.J."/>
            <person name="Randall T.L."/>
            <person name="Johnson L.K."/>
            <person name="Heinzmann C."/>
            <person name="Klisak I."/>
            <person name="Sparkes R.S."/>
            <person name="Lusis A.J."/>
        </authorList>
    </citation>
    <scope>NUCLEOTIDE SEQUENCE [GENOMIC DNA] OF 15-60</scope>
</reference>
<proteinExistence type="inferred from homology"/>
<organism>
    <name type="scientific">Homo sapiens</name>
    <name type="common">Human</name>
    <dbReference type="NCBI Taxonomy" id="9606"/>
    <lineage>
        <taxon>Eukaryota</taxon>
        <taxon>Metazoa</taxon>
        <taxon>Chordata</taxon>
        <taxon>Craniata</taxon>
        <taxon>Vertebrata</taxon>
        <taxon>Euteleostomi</taxon>
        <taxon>Mammalia</taxon>
        <taxon>Eutheria</taxon>
        <taxon>Euarchontoglires</taxon>
        <taxon>Primates</taxon>
        <taxon>Haplorrhini</taxon>
        <taxon>Catarrhini</taxon>
        <taxon>Hominidae</taxon>
        <taxon>Homo</taxon>
    </lineage>
</organism>
<comment type="function">
    <text evidence="3">Inactive phospholipase.</text>
</comment>
<comment type="cofactor">
    <cofactor evidence="1">
        <name>Ca(2+)</name>
        <dbReference type="ChEBI" id="CHEBI:29108"/>
    </cofactor>
    <text evidence="1">Binds 1 Ca(2+) ion per subunit.</text>
</comment>
<comment type="subcellular location">
    <subcellularLocation>
        <location evidence="3">Secreted</location>
    </subcellularLocation>
</comment>
<comment type="similarity">
    <text evidence="3">Belongs to the phospholipase A2 family.</text>
</comment>
<comment type="caution">
    <text evidence="3">Ser-67 is present instead of the conserved His which is one of the active site residues. It is therefore expected that this protein lacks catalytic activity.</text>
</comment>
<comment type="caution">
    <text evidence="3">The N-terminal region is predicted based on cross-species conservation and limited EST data. Exact gene structure in this region is unclear.</text>
</comment>